<comment type="function">
    <text evidence="1">RNA chaperone that binds small regulatory RNA (sRNAs) and mRNAs to facilitate mRNA translational regulation in response to envelope stress, environmental stress and changes in metabolite concentrations. Also binds with high specificity to tRNAs.</text>
</comment>
<comment type="subunit">
    <text evidence="1">Homohexamer.</text>
</comment>
<comment type="similarity">
    <text evidence="1">Belongs to the Hfq family.</text>
</comment>
<reference key="1">
    <citation type="submission" date="2007-08" db="EMBL/GenBank/DDBJ databases">
        <title>Complete sequence of Thermotoga lettingae TMO.</title>
        <authorList>
            <consortium name="US DOE Joint Genome Institute"/>
            <person name="Copeland A."/>
            <person name="Lucas S."/>
            <person name="Lapidus A."/>
            <person name="Barry K."/>
            <person name="Glavina del Rio T."/>
            <person name="Dalin E."/>
            <person name="Tice H."/>
            <person name="Pitluck S."/>
            <person name="Foster B."/>
            <person name="Bruce D."/>
            <person name="Schmutz J."/>
            <person name="Larimer F."/>
            <person name="Land M."/>
            <person name="Hauser L."/>
            <person name="Kyrpides N."/>
            <person name="Mikhailova N."/>
            <person name="Nelson K."/>
            <person name="Gogarten J.P."/>
            <person name="Noll K."/>
            <person name="Richardson P."/>
        </authorList>
    </citation>
    <scope>NUCLEOTIDE SEQUENCE [LARGE SCALE GENOMIC DNA]</scope>
    <source>
        <strain>ATCC BAA-301 / DSM 14385 / NBRC 107922 / TMO</strain>
    </source>
</reference>
<evidence type="ECO:0000255" key="1">
    <source>
        <dbReference type="HAMAP-Rule" id="MF_00436"/>
    </source>
</evidence>
<evidence type="ECO:0000255" key="2">
    <source>
        <dbReference type="PROSITE-ProRule" id="PRU01346"/>
    </source>
</evidence>
<organism>
    <name type="scientific">Pseudothermotoga lettingae (strain ATCC BAA-301 / DSM 14385 / NBRC 107922 / TMO)</name>
    <name type="common">Thermotoga lettingae</name>
    <dbReference type="NCBI Taxonomy" id="416591"/>
    <lineage>
        <taxon>Bacteria</taxon>
        <taxon>Thermotogati</taxon>
        <taxon>Thermotogota</taxon>
        <taxon>Thermotogae</taxon>
        <taxon>Thermotogales</taxon>
        <taxon>Thermotogaceae</taxon>
        <taxon>Pseudothermotoga</taxon>
    </lineage>
</organism>
<accession>A8F5B4</accession>
<name>HFQ_PSELT</name>
<proteinExistence type="inferred from homology"/>
<sequence>MTEKFNLQDRFLNMLRTGKIEVKVYLVNGFQTKGIIRSFDSYTILLESENQQNLIYKHAISTIMPSSFVRLVKKEEEEQEGQTESATNKTQ</sequence>
<protein>
    <recommendedName>
        <fullName evidence="1">RNA-binding protein Hfq</fullName>
    </recommendedName>
</protein>
<keyword id="KW-1185">Reference proteome</keyword>
<keyword id="KW-0694">RNA-binding</keyword>
<keyword id="KW-0346">Stress response</keyword>
<dbReference type="EMBL" id="CP000812">
    <property type="protein sequence ID" value="ABV33348.1"/>
    <property type="molecule type" value="Genomic_DNA"/>
</dbReference>
<dbReference type="RefSeq" id="WP_012002829.1">
    <property type="nucleotide sequence ID" value="NZ_BSDV01000001.1"/>
</dbReference>
<dbReference type="SMR" id="A8F5B4"/>
<dbReference type="STRING" id="416591.Tlet_0782"/>
<dbReference type="KEGG" id="tle:Tlet_0782"/>
<dbReference type="eggNOG" id="COG1923">
    <property type="taxonomic scope" value="Bacteria"/>
</dbReference>
<dbReference type="HOGENOM" id="CLU_113688_0_2_0"/>
<dbReference type="OrthoDB" id="9799751at2"/>
<dbReference type="Proteomes" id="UP000002016">
    <property type="component" value="Chromosome"/>
</dbReference>
<dbReference type="GO" id="GO:0005829">
    <property type="term" value="C:cytosol"/>
    <property type="evidence" value="ECO:0007669"/>
    <property type="project" value="TreeGrafter"/>
</dbReference>
<dbReference type="GO" id="GO:0003723">
    <property type="term" value="F:RNA binding"/>
    <property type="evidence" value="ECO:0007669"/>
    <property type="project" value="UniProtKB-UniRule"/>
</dbReference>
<dbReference type="GO" id="GO:0006355">
    <property type="term" value="P:regulation of DNA-templated transcription"/>
    <property type="evidence" value="ECO:0007669"/>
    <property type="project" value="InterPro"/>
</dbReference>
<dbReference type="GO" id="GO:0043487">
    <property type="term" value="P:regulation of RNA stability"/>
    <property type="evidence" value="ECO:0007669"/>
    <property type="project" value="TreeGrafter"/>
</dbReference>
<dbReference type="GO" id="GO:0045974">
    <property type="term" value="P:regulation of translation, ncRNA-mediated"/>
    <property type="evidence" value="ECO:0007669"/>
    <property type="project" value="TreeGrafter"/>
</dbReference>
<dbReference type="CDD" id="cd01716">
    <property type="entry name" value="Hfq"/>
    <property type="match status" value="1"/>
</dbReference>
<dbReference type="Gene3D" id="2.30.30.100">
    <property type="match status" value="1"/>
</dbReference>
<dbReference type="HAMAP" id="MF_00436">
    <property type="entry name" value="Hfq"/>
    <property type="match status" value="1"/>
</dbReference>
<dbReference type="InterPro" id="IPR005001">
    <property type="entry name" value="Hfq"/>
</dbReference>
<dbReference type="InterPro" id="IPR010920">
    <property type="entry name" value="LSM_dom_sf"/>
</dbReference>
<dbReference type="InterPro" id="IPR047575">
    <property type="entry name" value="Sm"/>
</dbReference>
<dbReference type="NCBIfam" id="TIGR02383">
    <property type="entry name" value="Hfq"/>
    <property type="match status" value="1"/>
</dbReference>
<dbReference type="NCBIfam" id="NF001602">
    <property type="entry name" value="PRK00395.1"/>
    <property type="match status" value="1"/>
</dbReference>
<dbReference type="PANTHER" id="PTHR34772">
    <property type="entry name" value="RNA-BINDING PROTEIN HFQ"/>
    <property type="match status" value="1"/>
</dbReference>
<dbReference type="PANTHER" id="PTHR34772:SF1">
    <property type="entry name" value="RNA-BINDING PROTEIN HFQ"/>
    <property type="match status" value="1"/>
</dbReference>
<dbReference type="Pfam" id="PF17209">
    <property type="entry name" value="Hfq"/>
    <property type="match status" value="1"/>
</dbReference>
<dbReference type="SUPFAM" id="SSF50182">
    <property type="entry name" value="Sm-like ribonucleoproteins"/>
    <property type="match status" value="1"/>
</dbReference>
<dbReference type="PROSITE" id="PS52002">
    <property type="entry name" value="SM"/>
    <property type="match status" value="1"/>
</dbReference>
<feature type="chain" id="PRO_1000072331" description="RNA-binding protein Hfq">
    <location>
        <begin position="1"/>
        <end position="91"/>
    </location>
</feature>
<feature type="domain" description="Sm" evidence="2">
    <location>
        <begin position="9"/>
        <end position="69"/>
    </location>
</feature>
<gene>
    <name evidence="1" type="primary">hfq</name>
    <name type="ordered locus">Tlet_0782</name>
</gene>